<accession>G2TRR9</accession>
<organism>
    <name type="scientific">Schizosaccharomyces pombe (strain 972 / ATCC 24843)</name>
    <name type="common">Fission yeast</name>
    <dbReference type="NCBI Taxonomy" id="284812"/>
    <lineage>
        <taxon>Eukaryota</taxon>
        <taxon>Fungi</taxon>
        <taxon>Dikarya</taxon>
        <taxon>Ascomycota</taxon>
        <taxon>Taphrinomycotina</taxon>
        <taxon>Schizosaccharomycetes</taxon>
        <taxon>Schizosaccharomycetales</taxon>
        <taxon>Schizosaccharomycetaceae</taxon>
        <taxon>Schizosaccharomyces</taxon>
    </lineage>
</organism>
<reference key="1">
    <citation type="journal article" date="2002" name="Nature">
        <title>The genome sequence of Schizosaccharomyces pombe.</title>
        <authorList>
            <person name="Wood V."/>
            <person name="Gwilliam R."/>
            <person name="Rajandream M.A."/>
            <person name="Lyne M.H."/>
            <person name="Lyne R."/>
            <person name="Stewart A."/>
            <person name="Sgouros J.G."/>
            <person name="Peat N."/>
            <person name="Hayles J."/>
            <person name="Baker S.G."/>
            <person name="Basham D."/>
            <person name="Bowman S."/>
            <person name="Brooks K."/>
            <person name="Brown D."/>
            <person name="Brown S."/>
            <person name="Chillingworth T."/>
            <person name="Churcher C.M."/>
            <person name="Collins M."/>
            <person name="Connor R."/>
            <person name="Cronin A."/>
            <person name="Davis P."/>
            <person name="Feltwell T."/>
            <person name="Fraser A."/>
            <person name="Gentles S."/>
            <person name="Goble A."/>
            <person name="Hamlin N."/>
            <person name="Harris D.E."/>
            <person name="Hidalgo J."/>
            <person name="Hodgson G."/>
            <person name="Holroyd S."/>
            <person name="Hornsby T."/>
            <person name="Howarth S."/>
            <person name="Huckle E.J."/>
            <person name="Hunt S."/>
            <person name="Jagels K."/>
            <person name="James K.D."/>
            <person name="Jones L."/>
            <person name="Jones M."/>
            <person name="Leather S."/>
            <person name="McDonald S."/>
            <person name="McLean J."/>
            <person name="Mooney P."/>
            <person name="Moule S."/>
            <person name="Mungall K.L."/>
            <person name="Murphy L.D."/>
            <person name="Niblett D."/>
            <person name="Odell C."/>
            <person name="Oliver K."/>
            <person name="O'Neil S."/>
            <person name="Pearson D."/>
            <person name="Quail M.A."/>
            <person name="Rabbinowitsch E."/>
            <person name="Rutherford K.M."/>
            <person name="Rutter S."/>
            <person name="Saunders D."/>
            <person name="Seeger K."/>
            <person name="Sharp S."/>
            <person name="Skelton J."/>
            <person name="Simmonds M.N."/>
            <person name="Squares R."/>
            <person name="Squares S."/>
            <person name="Stevens K."/>
            <person name="Taylor K."/>
            <person name="Taylor R.G."/>
            <person name="Tivey A."/>
            <person name="Walsh S.V."/>
            <person name="Warren T."/>
            <person name="Whitehead S."/>
            <person name="Woodward J.R."/>
            <person name="Volckaert G."/>
            <person name="Aert R."/>
            <person name="Robben J."/>
            <person name="Grymonprez B."/>
            <person name="Weltjens I."/>
            <person name="Vanstreels E."/>
            <person name="Rieger M."/>
            <person name="Schaefer M."/>
            <person name="Mueller-Auer S."/>
            <person name="Gabel C."/>
            <person name="Fuchs M."/>
            <person name="Duesterhoeft A."/>
            <person name="Fritzc C."/>
            <person name="Holzer E."/>
            <person name="Moestl D."/>
            <person name="Hilbert H."/>
            <person name="Borzym K."/>
            <person name="Langer I."/>
            <person name="Beck A."/>
            <person name="Lehrach H."/>
            <person name="Reinhardt R."/>
            <person name="Pohl T.M."/>
            <person name="Eger P."/>
            <person name="Zimmermann W."/>
            <person name="Wedler H."/>
            <person name="Wambutt R."/>
            <person name="Purnelle B."/>
            <person name="Goffeau A."/>
            <person name="Cadieu E."/>
            <person name="Dreano S."/>
            <person name="Gloux S."/>
            <person name="Lelaure V."/>
            <person name="Mottier S."/>
            <person name="Galibert F."/>
            <person name="Aves S.J."/>
            <person name="Xiang Z."/>
            <person name="Hunt C."/>
            <person name="Moore K."/>
            <person name="Hurst S.M."/>
            <person name="Lucas M."/>
            <person name="Rochet M."/>
            <person name="Gaillardin C."/>
            <person name="Tallada V.A."/>
            <person name="Garzon A."/>
            <person name="Thode G."/>
            <person name="Daga R.R."/>
            <person name="Cruzado L."/>
            <person name="Jimenez J."/>
            <person name="Sanchez M."/>
            <person name="del Rey F."/>
            <person name="Benito J."/>
            <person name="Dominguez A."/>
            <person name="Revuelta J.L."/>
            <person name="Moreno S."/>
            <person name="Armstrong J."/>
            <person name="Forsburg S.L."/>
            <person name="Cerutti L."/>
            <person name="Lowe T."/>
            <person name="McCombie W.R."/>
            <person name="Paulsen I."/>
            <person name="Potashkin J."/>
            <person name="Shpakovski G.V."/>
            <person name="Ussery D."/>
            <person name="Barrell B.G."/>
            <person name="Nurse P."/>
        </authorList>
    </citation>
    <scope>NUCLEOTIDE SEQUENCE [LARGE SCALE GENOMIC DNA]</scope>
    <source>
        <strain>972 / ATCC 24843</strain>
    </source>
</reference>
<reference key="2">
    <citation type="journal article" date="2011" name="Science">
        <title>Comparative functional genomics of the fission yeasts.</title>
        <authorList>
            <person name="Rhind N."/>
            <person name="Chen Z."/>
            <person name="Yassour M."/>
            <person name="Thompson D.A."/>
            <person name="Haas B.J."/>
            <person name="Habib N."/>
            <person name="Wapinski I."/>
            <person name="Roy S."/>
            <person name="Lin M.F."/>
            <person name="Heiman D.I."/>
            <person name="Young S.K."/>
            <person name="Furuya K."/>
            <person name="Guo Y."/>
            <person name="Pidoux A."/>
            <person name="Chen H.M."/>
            <person name="Robbertse B."/>
            <person name="Goldberg J.M."/>
            <person name="Aoki K."/>
            <person name="Bayne E.H."/>
            <person name="Berlin A.M."/>
            <person name="Desjardins C.A."/>
            <person name="Dobbs E."/>
            <person name="Dukaj L."/>
            <person name="Fan L."/>
            <person name="FitzGerald M.G."/>
            <person name="French C."/>
            <person name="Gujja S."/>
            <person name="Hansen K."/>
            <person name="Keifenheim D."/>
            <person name="Levin J.Z."/>
            <person name="Mosher R.A."/>
            <person name="Mueller C.A."/>
            <person name="Pfiffner J."/>
            <person name="Priest M."/>
            <person name="Russ C."/>
            <person name="Smialowska A."/>
            <person name="Swoboda P."/>
            <person name="Sykes S.M."/>
            <person name="Vaughn M."/>
            <person name="Vengrova S."/>
            <person name="Yoder R."/>
            <person name="Zeng Q."/>
            <person name="Allshire R."/>
            <person name="Baulcombe D."/>
            <person name="Birren B.W."/>
            <person name="Brown W."/>
            <person name="Ekwall K."/>
            <person name="Kellis M."/>
            <person name="Leatherwood J."/>
            <person name="Levin H."/>
            <person name="Margalit H."/>
            <person name="Martienssen R."/>
            <person name="Nieduszynski C.A."/>
            <person name="Spatafora J.W."/>
            <person name="Friedman N."/>
            <person name="Dalgaard J.Z."/>
            <person name="Baumann P."/>
            <person name="Niki H."/>
            <person name="Regev A."/>
            <person name="Nusbaum C."/>
        </authorList>
    </citation>
    <scope>IDENTIFICATION</scope>
</reference>
<feature type="chain" id="PRO_0000416661" description="Uncharacterized protein PB21E7.11">
    <location>
        <begin position="1"/>
        <end position="164"/>
    </location>
</feature>
<feature type="region of interest" description="Disordered" evidence="1">
    <location>
        <begin position="1"/>
        <end position="62"/>
    </location>
</feature>
<feature type="compositionally biased region" description="Polar residues" evidence="1">
    <location>
        <begin position="1"/>
        <end position="29"/>
    </location>
</feature>
<feature type="compositionally biased region" description="Low complexity" evidence="1">
    <location>
        <begin position="43"/>
        <end position="62"/>
    </location>
</feature>
<gene>
    <name type="ORF">SPBPB21E7.11</name>
</gene>
<protein>
    <recommendedName>
        <fullName>Uncharacterized protein PB21E7.11</fullName>
    </recommendedName>
</protein>
<name>YP3B_SCHPO</name>
<proteinExistence type="predicted"/>
<dbReference type="EMBL" id="CU329671">
    <property type="protein sequence ID" value="CCD31350.1"/>
    <property type="molecule type" value="Genomic_DNA"/>
</dbReference>
<dbReference type="RefSeq" id="XP_004001696.1">
    <property type="nucleotide sequence ID" value="XM_004001647.1"/>
</dbReference>
<dbReference type="iPTMnet" id="G2TRR9"/>
<dbReference type="PaxDb" id="4896-SPBPB21E7.11.1"/>
<dbReference type="EnsemblFungi" id="SPBPB21E7.11.1">
    <property type="protein sequence ID" value="SPBPB21E7.11.1:pep"/>
    <property type="gene ID" value="SPBPB21E7.11"/>
</dbReference>
<dbReference type="PomBase" id="SPBPB21E7.11"/>
<dbReference type="VEuPathDB" id="FungiDB:SPBPB21E7.11"/>
<dbReference type="HOGENOM" id="CLU_1620022_0_0_1"/>
<dbReference type="InParanoid" id="G2TRR9"/>
<dbReference type="PRO" id="PR:G2TRR9"/>
<dbReference type="Proteomes" id="UP000002485">
    <property type="component" value="Chromosome II"/>
</dbReference>
<sequence length="164" mass="17893">MLCVRSSSSNLESDTYLSRYSTRASAGTGSTYGFGLAGDRGYSSDSSSSSSESKPSNNKNIDFIYNNNAESNLSEYLGKDIPEDLSGFRDTASAPDTQSDVRNCDSIRKYQSLSSAGSGSTYGYGAGGNRGFMDESNESPKEDYINQKKHSKLFLLLYRIFHLI</sequence>
<evidence type="ECO:0000256" key="1">
    <source>
        <dbReference type="SAM" id="MobiDB-lite"/>
    </source>
</evidence>
<keyword id="KW-1185">Reference proteome</keyword>